<reference key="1">
    <citation type="journal article" date="2006" name="Science">
        <title>A small microbial genome: the end of a long symbiotic relationship?</title>
        <authorList>
            <person name="Perez-Brocal V."/>
            <person name="Gil R."/>
            <person name="Ramos S."/>
            <person name="Lamelas A."/>
            <person name="Postigo M."/>
            <person name="Michelena J.M."/>
            <person name="Silva F.J."/>
            <person name="Moya A."/>
            <person name="Latorre A."/>
        </authorList>
    </citation>
    <scope>NUCLEOTIDE SEQUENCE [LARGE SCALE GENOMIC DNA]</scope>
    <source>
        <strain>Cc</strain>
    </source>
</reference>
<evidence type="ECO:0000255" key="1">
    <source>
        <dbReference type="HAMAP-Rule" id="MF_00222"/>
    </source>
</evidence>
<protein>
    <recommendedName>
        <fullName evidence="1">Shikimate dehydrogenase (NADP(+))</fullName>
        <shortName evidence="1">SDH</shortName>
        <ecNumber evidence="1">1.1.1.25</ecNumber>
    </recommendedName>
</protein>
<name>AROE_BUCCC</name>
<gene>
    <name evidence="1" type="primary">aroE</name>
    <name type="ordered locus">BCc_312</name>
</gene>
<sequence>MQNSKYCEKKIHIALFGNPIEHSLSPLIHKNFSKEIKINYNYNSFLCTKSNFFVIVKNFFQNGGFGCNITVPFKKKSFQISNKNTKYVKISNSVNVLKKSSNNNIIGYNTDGIGLIYDLNRLKYITENSFILILGSGGAVYSIVYHLLKKKCCIFILNRTISKSCILVNKFKKFGKIFVFDKNLYTKKFDIIINATSCGLYNFSPKFPKNLIFPNTKCYDISYSKNKKLTPFLSTCRDLGSRKYSDGLGMLVAQAAYSCYIWFNILPNIKKNINLLKSII</sequence>
<dbReference type="EC" id="1.1.1.25" evidence="1"/>
<dbReference type="EMBL" id="CP000263">
    <property type="protein sequence ID" value="ABJ90766.1"/>
    <property type="molecule type" value="Genomic_DNA"/>
</dbReference>
<dbReference type="RefSeq" id="WP_011672685.1">
    <property type="nucleotide sequence ID" value="NC_008513.1"/>
</dbReference>
<dbReference type="SMR" id="Q057D3"/>
<dbReference type="STRING" id="372461.BCc_312"/>
<dbReference type="KEGG" id="bcc:BCc_312"/>
<dbReference type="eggNOG" id="COG0169">
    <property type="taxonomic scope" value="Bacteria"/>
</dbReference>
<dbReference type="HOGENOM" id="CLU_044063_2_1_6"/>
<dbReference type="OrthoDB" id="9776868at2"/>
<dbReference type="UniPathway" id="UPA00053">
    <property type="reaction ID" value="UER00087"/>
</dbReference>
<dbReference type="Proteomes" id="UP000000669">
    <property type="component" value="Chromosome"/>
</dbReference>
<dbReference type="GO" id="GO:0005829">
    <property type="term" value="C:cytosol"/>
    <property type="evidence" value="ECO:0007669"/>
    <property type="project" value="TreeGrafter"/>
</dbReference>
<dbReference type="GO" id="GO:0050661">
    <property type="term" value="F:NADP binding"/>
    <property type="evidence" value="ECO:0007669"/>
    <property type="project" value="InterPro"/>
</dbReference>
<dbReference type="GO" id="GO:0004764">
    <property type="term" value="F:shikimate 3-dehydrogenase (NADP+) activity"/>
    <property type="evidence" value="ECO:0007669"/>
    <property type="project" value="UniProtKB-UniRule"/>
</dbReference>
<dbReference type="GO" id="GO:0008652">
    <property type="term" value="P:amino acid biosynthetic process"/>
    <property type="evidence" value="ECO:0007669"/>
    <property type="project" value="UniProtKB-KW"/>
</dbReference>
<dbReference type="GO" id="GO:0009073">
    <property type="term" value="P:aromatic amino acid family biosynthetic process"/>
    <property type="evidence" value="ECO:0007669"/>
    <property type="project" value="UniProtKB-KW"/>
</dbReference>
<dbReference type="GO" id="GO:0009423">
    <property type="term" value="P:chorismate biosynthetic process"/>
    <property type="evidence" value="ECO:0007669"/>
    <property type="project" value="UniProtKB-UniRule"/>
</dbReference>
<dbReference type="GO" id="GO:0019632">
    <property type="term" value="P:shikimate metabolic process"/>
    <property type="evidence" value="ECO:0007669"/>
    <property type="project" value="InterPro"/>
</dbReference>
<dbReference type="CDD" id="cd01065">
    <property type="entry name" value="NAD_bind_Shikimate_DH"/>
    <property type="match status" value="1"/>
</dbReference>
<dbReference type="Gene3D" id="3.40.50.10860">
    <property type="entry name" value="Leucine Dehydrogenase, chain A, domain 1"/>
    <property type="match status" value="1"/>
</dbReference>
<dbReference type="Gene3D" id="3.40.50.720">
    <property type="entry name" value="NAD(P)-binding Rossmann-like Domain"/>
    <property type="match status" value="1"/>
</dbReference>
<dbReference type="HAMAP" id="MF_00222">
    <property type="entry name" value="Shikimate_DH_AroE"/>
    <property type="match status" value="1"/>
</dbReference>
<dbReference type="InterPro" id="IPR046346">
    <property type="entry name" value="Aminoacid_DH-like_N_sf"/>
</dbReference>
<dbReference type="InterPro" id="IPR036291">
    <property type="entry name" value="NAD(P)-bd_dom_sf"/>
</dbReference>
<dbReference type="InterPro" id="IPR041121">
    <property type="entry name" value="SDH_C"/>
</dbReference>
<dbReference type="InterPro" id="IPR011342">
    <property type="entry name" value="Shikimate_DH"/>
</dbReference>
<dbReference type="InterPro" id="IPR013708">
    <property type="entry name" value="Shikimate_DH-bd_N"/>
</dbReference>
<dbReference type="InterPro" id="IPR022893">
    <property type="entry name" value="Shikimate_DH_fam"/>
</dbReference>
<dbReference type="InterPro" id="IPR006151">
    <property type="entry name" value="Shikm_DH/Glu-tRNA_Rdtase"/>
</dbReference>
<dbReference type="NCBIfam" id="TIGR00507">
    <property type="entry name" value="aroE"/>
    <property type="match status" value="1"/>
</dbReference>
<dbReference type="NCBIfam" id="NF001310">
    <property type="entry name" value="PRK00258.1-2"/>
    <property type="match status" value="1"/>
</dbReference>
<dbReference type="PANTHER" id="PTHR21089:SF1">
    <property type="entry name" value="BIFUNCTIONAL 3-DEHYDROQUINATE DEHYDRATASE_SHIKIMATE DEHYDROGENASE, CHLOROPLASTIC"/>
    <property type="match status" value="1"/>
</dbReference>
<dbReference type="PANTHER" id="PTHR21089">
    <property type="entry name" value="SHIKIMATE DEHYDROGENASE"/>
    <property type="match status" value="1"/>
</dbReference>
<dbReference type="Pfam" id="PF18317">
    <property type="entry name" value="SDH_C"/>
    <property type="match status" value="1"/>
</dbReference>
<dbReference type="Pfam" id="PF01488">
    <property type="entry name" value="Shikimate_DH"/>
    <property type="match status" value="1"/>
</dbReference>
<dbReference type="Pfam" id="PF08501">
    <property type="entry name" value="Shikimate_dh_N"/>
    <property type="match status" value="1"/>
</dbReference>
<dbReference type="SUPFAM" id="SSF53223">
    <property type="entry name" value="Aminoacid dehydrogenase-like, N-terminal domain"/>
    <property type="match status" value="1"/>
</dbReference>
<dbReference type="SUPFAM" id="SSF51735">
    <property type="entry name" value="NAD(P)-binding Rossmann-fold domains"/>
    <property type="match status" value="1"/>
</dbReference>
<comment type="function">
    <text evidence="1">Involved in the biosynthesis of the chorismate, which leads to the biosynthesis of aromatic amino acids. Catalyzes the reversible NADPH linked reduction of 3-dehydroshikimate (DHSA) to yield shikimate (SA).</text>
</comment>
<comment type="catalytic activity">
    <reaction evidence="1">
        <text>shikimate + NADP(+) = 3-dehydroshikimate + NADPH + H(+)</text>
        <dbReference type="Rhea" id="RHEA:17737"/>
        <dbReference type="ChEBI" id="CHEBI:15378"/>
        <dbReference type="ChEBI" id="CHEBI:16630"/>
        <dbReference type="ChEBI" id="CHEBI:36208"/>
        <dbReference type="ChEBI" id="CHEBI:57783"/>
        <dbReference type="ChEBI" id="CHEBI:58349"/>
        <dbReference type="EC" id="1.1.1.25"/>
    </reaction>
</comment>
<comment type="pathway">
    <text evidence="1">Metabolic intermediate biosynthesis; chorismate biosynthesis; chorismate from D-erythrose 4-phosphate and phosphoenolpyruvate: step 4/7.</text>
</comment>
<comment type="subunit">
    <text evidence="1">Homodimer.</text>
</comment>
<comment type="similarity">
    <text evidence="1">Belongs to the shikimate dehydrogenase family.</text>
</comment>
<proteinExistence type="inferred from homology"/>
<organism>
    <name type="scientific">Buchnera aphidicola subsp. Cinara cedri (strain Cc)</name>
    <dbReference type="NCBI Taxonomy" id="372461"/>
    <lineage>
        <taxon>Bacteria</taxon>
        <taxon>Pseudomonadati</taxon>
        <taxon>Pseudomonadota</taxon>
        <taxon>Gammaproteobacteria</taxon>
        <taxon>Enterobacterales</taxon>
        <taxon>Erwiniaceae</taxon>
        <taxon>Buchnera</taxon>
    </lineage>
</organism>
<feature type="chain" id="PRO_0000325110" description="Shikimate dehydrogenase (NADP(+))">
    <location>
        <begin position="1"/>
        <end position="280"/>
    </location>
</feature>
<feature type="active site" description="Proton acceptor" evidence="1">
    <location>
        <position position="74"/>
    </location>
</feature>
<feature type="binding site" evidence="1">
    <location>
        <begin position="23"/>
        <end position="25"/>
    </location>
    <ligand>
        <name>shikimate</name>
        <dbReference type="ChEBI" id="CHEBI:36208"/>
    </ligand>
</feature>
<feature type="binding site" evidence="1">
    <location>
        <position position="70"/>
    </location>
    <ligand>
        <name>shikimate</name>
        <dbReference type="ChEBI" id="CHEBI:36208"/>
    </ligand>
</feature>
<feature type="binding site" evidence="1">
    <location>
        <position position="95"/>
    </location>
    <ligand>
        <name>shikimate</name>
        <dbReference type="ChEBI" id="CHEBI:36208"/>
    </ligand>
</feature>
<feature type="binding site" evidence="1">
    <location>
        <position position="111"/>
    </location>
    <ligand>
        <name>shikimate</name>
        <dbReference type="ChEBI" id="CHEBI:36208"/>
    </ligand>
</feature>
<feature type="binding site" evidence="1">
    <location>
        <begin position="135"/>
        <end position="139"/>
    </location>
    <ligand>
        <name>NADP(+)</name>
        <dbReference type="ChEBI" id="CHEBI:58349"/>
    </ligand>
</feature>
<feature type="binding site" evidence="1">
    <location>
        <begin position="158"/>
        <end position="163"/>
    </location>
    <ligand>
        <name>NADP(+)</name>
        <dbReference type="ChEBI" id="CHEBI:58349"/>
    </ligand>
</feature>
<feature type="binding site" evidence="1">
    <location>
        <position position="221"/>
    </location>
    <ligand>
        <name>NADP(+)</name>
        <dbReference type="ChEBI" id="CHEBI:58349"/>
    </ligand>
</feature>
<feature type="binding site" evidence="1">
    <location>
        <position position="223"/>
    </location>
    <ligand>
        <name>shikimate</name>
        <dbReference type="ChEBI" id="CHEBI:36208"/>
    </ligand>
</feature>
<feature type="binding site" evidence="1">
    <location>
        <position position="247"/>
    </location>
    <ligand>
        <name>NADP(+)</name>
        <dbReference type="ChEBI" id="CHEBI:58349"/>
    </ligand>
</feature>
<accession>Q057D3</accession>
<keyword id="KW-0028">Amino-acid biosynthesis</keyword>
<keyword id="KW-0057">Aromatic amino acid biosynthesis</keyword>
<keyword id="KW-0521">NADP</keyword>
<keyword id="KW-0560">Oxidoreductase</keyword>
<keyword id="KW-1185">Reference proteome</keyword>